<proteinExistence type="inferred from homology"/>
<feature type="chain" id="PRO_1000144022" description="Large ribosomal subunit protein uL6">
    <location>
        <begin position="1"/>
        <end position="182"/>
    </location>
</feature>
<comment type="function">
    <text evidence="1">This protein binds to the 23S rRNA, and is important in its secondary structure. It is located near the subunit interface in the base of the L7/L12 stalk, and near the tRNA binding site of the peptidyltransferase center.</text>
</comment>
<comment type="subunit">
    <text evidence="1">Part of the 50S ribosomal subunit.</text>
</comment>
<comment type="similarity">
    <text evidence="1">Belongs to the universal ribosomal protein uL6 family.</text>
</comment>
<dbReference type="EMBL" id="CP001037">
    <property type="protein sequence ID" value="ACC82749.1"/>
    <property type="molecule type" value="Genomic_DNA"/>
</dbReference>
<dbReference type="RefSeq" id="WP_012410711.1">
    <property type="nucleotide sequence ID" value="NC_010628.1"/>
</dbReference>
<dbReference type="SMR" id="B2ITP1"/>
<dbReference type="STRING" id="63737.Npun_R4376"/>
<dbReference type="EnsemblBacteria" id="ACC82749">
    <property type="protein sequence ID" value="ACC82749"/>
    <property type="gene ID" value="Npun_R4376"/>
</dbReference>
<dbReference type="KEGG" id="npu:Npun_R4376"/>
<dbReference type="eggNOG" id="COG0097">
    <property type="taxonomic scope" value="Bacteria"/>
</dbReference>
<dbReference type="HOGENOM" id="CLU_065464_1_2_3"/>
<dbReference type="OrthoDB" id="9805007at2"/>
<dbReference type="PhylomeDB" id="B2ITP1"/>
<dbReference type="Proteomes" id="UP000001191">
    <property type="component" value="Chromosome"/>
</dbReference>
<dbReference type="GO" id="GO:0022625">
    <property type="term" value="C:cytosolic large ribosomal subunit"/>
    <property type="evidence" value="ECO:0007669"/>
    <property type="project" value="TreeGrafter"/>
</dbReference>
<dbReference type="GO" id="GO:0019843">
    <property type="term" value="F:rRNA binding"/>
    <property type="evidence" value="ECO:0007669"/>
    <property type="project" value="UniProtKB-UniRule"/>
</dbReference>
<dbReference type="GO" id="GO:0003735">
    <property type="term" value="F:structural constituent of ribosome"/>
    <property type="evidence" value="ECO:0007669"/>
    <property type="project" value="InterPro"/>
</dbReference>
<dbReference type="GO" id="GO:0002181">
    <property type="term" value="P:cytoplasmic translation"/>
    <property type="evidence" value="ECO:0007669"/>
    <property type="project" value="TreeGrafter"/>
</dbReference>
<dbReference type="FunFam" id="3.90.930.12:FF:000001">
    <property type="entry name" value="50S ribosomal protein L6"/>
    <property type="match status" value="1"/>
</dbReference>
<dbReference type="FunFam" id="3.90.930.12:FF:000002">
    <property type="entry name" value="50S ribosomal protein L6"/>
    <property type="match status" value="1"/>
</dbReference>
<dbReference type="Gene3D" id="3.90.930.12">
    <property type="entry name" value="Ribosomal protein L6, alpha-beta domain"/>
    <property type="match status" value="2"/>
</dbReference>
<dbReference type="HAMAP" id="MF_01365_B">
    <property type="entry name" value="Ribosomal_uL6_B"/>
    <property type="match status" value="1"/>
</dbReference>
<dbReference type="InterPro" id="IPR000702">
    <property type="entry name" value="Ribosomal_uL6-like"/>
</dbReference>
<dbReference type="InterPro" id="IPR036789">
    <property type="entry name" value="Ribosomal_uL6-like_a/b-dom_sf"/>
</dbReference>
<dbReference type="InterPro" id="IPR020040">
    <property type="entry name" value="Ribosomal_uL6_a/b-dom"/>
</dbReference>
<dbReference type="InterPro" id="IPR019906">
    <property type="entry name" value="Ribosomal_uL6_bac-type"/>
</dbReference>
<dbReference type="InterPro" id="IPR002358">
    <property type="entry name" value="Ribosomal_uL6_CS"/>
</dbReference>
<dbReference type="NCBIfam" id="TIGR03654">
    <property type="entry name" value="L6_bact"/>
    <property type="match status" value="1"/>
</dbReference>
<dbReference type="PANTHER" id="PTHR11655">
    <property type="entry name" value="60S/50S RIBOSOMAL PROTEIN L6/L9"/>
    <property type="match status" value="1"/>
</dbReference>
<dbReference type="PANTHER" id="PTHR11655:SF14">
    <property type="entry name" value="LARGE RIBOSOMAL SUBUNIT PROTEIN UL6M"/>
    <property type="match status" value="1"/>
</dbReference>
<dbReference type="Pfam" id="PF00347">
    <property type="entry name" value="Ribosomal_L6"/>
    <property type="match status" value="2"/>
</dbReference>
<dbReference type="PIRSF" id="PIRSF002162">
    <property type="entry name" value="Ribosomal_L6"/>
    <property type="match status" value="1"/>
</dbReference>
<dbReference type="PRINTS" id="PR00059">
    <property type="entry name" value="RIBOSOMALL6"/>
</dbReference>
<dbReference type="SUPFAM" id="SSF56053">
    <property type="entry name" value="Ribosomal protein L6"/>
    <property type="match status" value="2"/>
</dbReference>
<dbReference type="PROSITE" id="PS00525">
    <property type="entry name" value="RIBOSOMAL_L6_1"/>
    <property type="match status" value="1"/>
</dbReference>
<sequence>MSRIGKRPITIPAKVQVAINGTNIVVKGPKGELSRTLRDNVSLSQEGEILHVNRRDETRTSKQLHGLSRTLVANMVEGVSQGFQRRLEIQGVGYRAQLQGRNLVLNMGYSHQVQIEPPDGIQFAVEGTTNVIVSGYDKEIVGNTAAKIRAVRPPEPYKGKGIRYAGEVVRRKAGKTGKGGKK</sequence>
<organism>
    <name type="scientific">Nostoc punctiforme (strain ATCC 29133 / PCC 73102)</name>
    <dbReference type="NCBI Taxonomy" id="63737"/>
    <lineage>
        <taxon>Bacteria</taxon>
        <taxon>Bacillati</taxon>
        <taxon>Cyanobacteriota</taxon>
        <taxon>Cyanophyceae</taxon>
        <taxon>Nostocales</taxon>
        <taxon>Nostocaceae</taxon>
        <taxon>Nostoc</taxon>
    </lineage>
</organism>
<reference key="1">
    <citation type="journal article" date="2013" name="Plant Physiol.">
        <title>A Nostoc punctiforme Sugar Transporter Necessary to Establish a Cyanobacterium-Plant Symbiosis.</title>
        <authorList>
            <person name="Ekman M."/>
            <person name="Picossi S."/>
            <person name="Campbell E.L."/>
            <person name="Meeks J.C."/>
            <person name="Flores E."/>
        </authorList>
    </citation>
    <scope>NUCLEOTIDE SEQUENCE [LARGE SCALE GENOMIC DNA]</scope>
    <source>
        <strain>ATCC 29133 / PCC 73102</strain>
    </source>
</reference>
<name>RL6_NOSP7</name>
<keyword id="KW-1185">Reference proteome</keyword>
<keyword id="KW-0687">Ribonucleoprotein</keyword>
<keyword id="KW-0689">Ribosomal protein</keyword>
<keyword id="KW-0694">RNA-binding</keyword>
<keyword id="KW-0699">rRNA-binding</keyword>
<protein>
    <recommendedName>
        <fullName evidence="1">Large ribosomal subunit protein uL6</fullName>
    </recommendedName>
    <alternativeName>
        <fullName evidence="2">50S ribosomal protein L6</fullName>
    </alternativeName>
</protein>
<evidence type="ECO:0000255" key="1">
    <source>
        <dbReference type="HAMAP-Rule" id="MF_01365"/>
    </source>
</evidence>
<evidence type="ECO:0000305" key="2"/>
<gene>
    <name evidence="1" type="primary">rplF</name>
    <name evidence="1" type="synonym">rpl6</name>
    <name type="ordered locus">Npun_R4376</name>
</gene>
<accession>B2ITP1</accession>